<comment type="function">
    <text evidence="5">Component of the mitochondrial ribosome (mitoribosome), a dedicated translation machinery responsible for the synthesis of mitochondrial genome-encoded proteins, including at least some of the essential transmembrane subunits of the mitochondrial respiratory chain. The mitoribosomes are attached to the mitochondrial inner membrane and translation products are cotranslationally integrated into the membrane.</text>
</comment>
<comment type="subunit">
    <text evidence="2">Component of the mitochondrial small ribosomal subunit (mt-SSU). Mature N.crassa 74S mitochondrial ribosomes consist of a small (37S) and a large (54S) subunit. The 37S small subunit contains a 16S ribosomal RNA (16S mt-rRNA) and 32 different proteins. The 54S large subunit contains a 23S rRNA (23S mt-rRNA) and 42 different proteins.</text>
</comment>
<comment type="subcellular location">
    <subcellularLocation>
        <location evidence="2">Mitochondrion</location>
    </subcellularLocation>
</comment>
<comment type="similarity">
    <text evidence="4">Belongs to the universal ribosomal protein uS2 family.</text>
</comment>
<name>RT04_NEUCR</name>
<reference key="1">
    <citation type="journal article" date="2003" name="Nature">
        <title>The genome sequence of the filamentous fungus Neurospora crassa.</title>
        <authorList>
            <person name="Galagan J.E."/>
            <person name="Calvo S.E."/>
            <person name="Borkovich K.A."/>
            <person name="Selker E.U."/>
            <person name="Read N.D."/>
            <person name="Jaffe D.B."/>
            <person name="FitzHugh W."/>
            <person name="Ma L.-J."/>
            <person name="Smirnov S."/>
            <person name="Purcell S."/>
            <person name="Rehman B."/>
            <person name="Elkins T."/>
            <person name="Engels R."/>
            <person name="Wang S."/>
            <person name="Nielsen C.B."/>
            <person name="Butler J."/>
            <person name="Endrizzi M."/>
            <person name="Qui D."/>
            <person name="Ianakiev P."/>
            <person name="Bell-Pedersen D."/>
            <person name="Nelson M.A."/>
            <person name="Werner-Washburne M."/>
            <person name="Selitrennikoff C.P."/>
            <person name="Kinsey J.A."/>
            <person name="Braun E.L."/>
            <person name="Zelter A."/>
            <person name="Schulte U."/>
            <person name="Kothe G.O."/>
            <person name="Jedd G."/>
            <person name="Mewes H.-W."/>
            <person name="Staben C."/>
            <person name="Marcotte E."/>
            <person name="Greenberg D."/>
            <person name="Roy A."/>
            <person name="Foley K."/>
            <person name="Naylor J."/>
            <person name="Stange-Thomann N."/>
            <person name="Barrett R."/>
            <person name="Gnerre S."/>
            <person name="Kamal M."/>
            <person name="Kamvysselis M."/>
            <person name="Mauceli E.W."/>
            <person name="Bielke C."/>
            <person name="Rudd S."/>
            <person name="Frishman D."/>
            <person name="Krystofova S."/>
            <person name="Rasmussen C."/>
            <person name="Metzenberg R.L."/>
            <person name="Perkins D.D."/>
            <person name="Kroken S."/>
            <person name="Cogoni C."/>
            <person name="Macino G."/>
            <person name="Catcheside D.E.A."/>
            <person name="Li W."/>
            <person name="Pratt R.J."/>
            <person name="Osmani S.A."/>
            <person name="DeSouza C.P.C."/>
            <person name="Glass N.L."/>
            <person name="Orbach M.J."/>
            <person name="Berglund J.A."/>
            <person name="Voelker R."/>
            <person name="Yarden O."/>
            <person name="Plamann M."/>
            <person name="Seiler S."/>
            <person name="Dunlap J.C."/>
            <person name="Radford A."/>
            <person name="Aramayo R."/>
            <person name="Natvig D.O."/>
            <person name="Alex L.A."/>
            <person name="Mannhaupt G."/>
            <person name="Ebbole D.J."/>
            <person name="Freitag M."/>
            <person name="Paulsen I."/>
            <person name="Sachs M.S."/>
            <person name="Lander E.S."/>
            <person name="Nusbaum C."/>
            <person name="Birren B.W."/>
        </authorList>
    </citation>
    <scope>NUCLEOTIDE SEQUENCE [LARGE SCALE GENOMIC DNA]</scope>
    <source>
        <strain>ATCC 24698 / 74-OR23-1A / CBS 708.71 / DSM 1257 / FGSC 987</strain>
    </source>
</reference>
<reference evidence="6 7" key="2">
    <citation type="journal article" date="2020" name="Nat. Commun.">
        <title>Analysis of translating mitoribosome reveals functional characteristics of translation in mitochondria of fungi.</title>
        <authorList>
            <person name="Itoh Y."/>
            <person name="Naschberger A."/>
            <person name="Mortezaei N."/>
            <person name="Herrmann J.M."/>
            <person name="Amunts A."/>
        </authorList>
    </citation>
    <scope>STRUCTURE BY ELECTRON MICROSCOPY (2.85 ANGSTROMS)</scope>
</reference>
<accession>V5ILE0</accession>
<sequence>MIVRNIGARLGRRALATPLSRASFPAQSRFLSQDNFTAPPPPPTNSKKQAAKTAFAEPTLEEQAEFYAESIEKHTPEFAASPAAEAWSAPSATATETVTTWDPSLVDEEALKLKQQIEAIPGNFKLFKQTKAQTQKLGAGVEVRYIPEQYLRNPPSDASLEDLMAAQAHMGHNTSLWNPANARYIYGVRQGIHIISLETTATHLRRAARVVEEVAYRGGLILFVGTRPGQRPIVVRAAELAKACHLFTKWRPGTITNREQLLGGVPLTVVDELDRPLSGFEDHLHDRRPLAPDLVVCLNPKENMTLLYECSLAKIPTIGIIDTNTNPSWVTYQIPANDDSLRATALISGVLGRAGERGQKRRLEAAQRGVVTWKTPADVQGYFELASARAADARRRQAQDNSVEEQKEKDTFLSEDALKAMFGGDARI</sequence>
<keyword id="KW-0002">3D-structure</keyword>
<keyword id="KW-0496">Mitochondrion</keyword>
<keyword id="KW-1185">Reference proteome</keyword>
<keyword id="KW-0687">Ribonucleoprotein</keyword>
<keyword id="KW-0689">Ribosomal protein</keyword>
<feature type="chain" id="PRO_0000458568" description="Small ribosomal subunit protein uS2m">
    <location>
        <begin position="1"/>
        <end position="428"/>
    </location>
</feature>
<feature type="region of interest" description="Disordered" evidence="1">
    <location>
        <begin position="30"/>
        <end position="50"/>
    </location>
</feature>
<proteinExistence type="evidence at protein level"/>
<protein>
    <recommendedName>
        <fullName evidence="3">Small ribosomal subunit protein uS2m</fullName>
    </recommendedName>
</protein>
<dbReference type="EMBL" id="CM002242">
    <property type="protein sequence ID" value="ESA41889.1"/>
    <property type="molecule type" value="Genomic_DNA"/>
</dbReference>
<dbReference type="RefSeq" id="XP_011395322.1">
    <property type="nucleotide sequence ID" value="XM_011397020.1"/>
</dbReference>
<dbReference type="PDB" id="6YW5">
    <property type="method" value="EM"/>
    <property type="resolution" value="2.85 A"/>
    <property type="chains" value="BB=1-428"/>
</dbReference>
<dbReference type="PDB" id="6YWE">
    <property type="method" value="EM"/>
    <property type="resolution" value="2.99 A"/>
    <property type="chains" value="BB=1-428"/>
</dbReference>
<dbReference type="PDB" id="6YWX">
    <property type="method" value="EM"/>
    <property type="resolution" value="3.10 A"/>
    <property type="chains" value="BB=1-428"/>
</dbReference>
<dbReference type="PDB" id="6YWY">
    <property type="method" value="EM"/>
    <property type="resolution" value="3.05 A"/>
    <property type="chains" value="BB=1-428"/>
</dbReference>
<dbReference type="PDBsum" id="6YW5"/>
<dbReference type="PDBsum" id="6YWE"/>
<dbReference type="PDBsum" id="6YWX"/>
<dbReference type="PDBsum" id="6YWY"/>
<dbReference type="EMDB" id="EMD-10958"/>
<dbReference type="EMDB" id="EMD-10965"/>
<dbReference type="EMDB" id="EMD-10978"/>
<dbReference type="EMDB" id="EMD-10985"/>
<dbReference type="SMR" id="V5ILE0"/>
<dbReference type="FunCoup" id="V5ILE0">
    <property type="interactions" value="687"/>
</dbReference>
<dbReference type="STRING" id="367110.V5ILE0"/>
<dbReference type="EnsemblFungi" id="ESA41889">
    <property type="protein sequence ID" value="ESA41889"/>
    <property type="gene ID" value="NCU12023"/>
</dbReference>
<dbReference type="GeneID" id="23568552"/>
<dbReference type="KEGG" id="ncr:NCU12023"/>
<dbReference type="VEuPathDB" id="FungiDB:NCU12023"/>
<dbReference type="OrthoDB" id="2320368at2759"/>
<dbReference type="Proteomes" id="UP000001805">
    <property type="component" value="Chromosome 7, Linkage Group VII"/>
</dbReference>
<dbReference type="GO" id="GO:0005763">
    <property type="term" value="C:mitochondrial small ribosomal subunit"/>
    <property type="evidence" value="ECO:0000318"/>
    <property type="project" value="GO_Central"/>
</dbReference>
<dbReference type="GO" id="GO:0003735">
    <property type="term" value="F:structural constituent of ribosome"/>
    <property type="evidence" value="ECO:0000318"/>
    <property type="project" value="GO_Central"/>
</dbReference>
<dbReference type="GO" id="GO:0006412">
    <property type="term" value="P:translation"/>
    <property type="evidence" value="ECO:0007669"/>
    <property type="project" value="InterPro"/>
</dbReference>
<dbReference type="CDD" id="cd01425">
    <property type="entry name" value="RPS2"/>
    <property type="match status" value="1"/>
</dbReference>
<dbReference type="Gene3D" id="3.40.50.10490">
    <property type="entry name" value="Glucose-6-phosphate isomerase like protein, domain 1"/>
    <property type="match status" value="1"/>
</dbReference>
<dbReference type="HAMAP" id="MF_00291_B">
    <property type="entry name" value="Ribosomal_uS2_B"/>
    <property type="match status" value="1"/>
</dbReference>
<dbReference type="InterPro" id="IPR001865">
    <property type="entry name" value="Ribosomal_uS2"/>
</dbReference>
<dbReference type="InterPro" id="IPR005706">
    <property type="entry name" value="Ribosomal_uS2_bac/mit/plastid"/>
</dbReference>
<dbReference type="InterPro" id="IPR018130">
    <property type="entry name" value="Ribosomal_uS2_CS"/>
</dbReference>
<dbReference type="InterPro" id="IPR023591">
    <property type="entry name" value="Ribosomal_uS2_flav_dom_sf"/>
</dbReference>
<dbReference type="NCBIfam" id="TIGR01011">
    <property type="entry name" value="rpsB_bact"/>
    <property type="match status" value="1"/>
</dbReference>
<dbReference type="PANTHER" id="PTHR12534">
    <property type="entry name" value="30S RIBOSOMAL PROTEIN S2 PROKARYOTIC AND ORGANELLAR"/>
    <property type="match status" value="1"/>
</dbReference>
<dbReference type="PANTHER" id="PTHR12534:SF0">
    <property type="entry name" value="SMALL RIBOSOMAL SUBUNIT PROTEIN US2M"/>
    <property type="match status" value="1"/>
</dbReference>
<dbReference type="Pfam" id="PF00318">
    <property type="entry name" value="Ribosomal_S2"/>
    <property type="match status" value="1"/>
</dbReference>
<dbReference type="PRINTS" id="PR00395">
    <property type="entry name" value="RIBOSOMALS2"/>
</dbReference>
<dbReference type="SUPFAM" id="SSF52313">
    <property type="entry name" value="Ribosomal protein S2"/>
    <property type="match status" value="1"/>
</dbReference>
<dbReference type="PROSITE" id="PS00962">
    <property type="entry name" value="RIBOSOMAL_S2_1"/>
    <property type="match status" value="1"/>
</dbReference>
<evidence type="ECO:0000256" key="1">
    <source>
        <dbReference type="SAM" id="MobiDB-lite"/>
    </source>
</evidence>
<evidence type="ECO:0000269" key="2">
    <source>
    </source>
</evidence>
<evidence type="ECO:0000303" key="3">
    <source>
    </source>
</evidence>
<evidence type="ECO:0000305" key="4"/>
<evidence type="ECO:0000305" key="5">
    <source>
    </source>
</evidence>
<evidence type="ECO:0007744" key="6">
    <source>
        <dbReference type="PDB" id="6YW5"/>
    </source>
</evidence>
<evidence type="ECO:0007744" key="7">
    <source>
        <dbReference type="PDB" id="6YWE"/>
    </source>
</evidence>
<organism>
    <name type="scientific">Neurospora crassa (strain ATCC 24698 / 74-OR23-1A / CBS 708.71 / DSM 1257 / FGSC 987)</name>
    <dbReference type="NCBI Taxonomy" id="367110"/>
    <lineage>
        <taxon>Eukaryota</taxon>
        <taxon>Fungi</taxon>
        <taxon>Dikarya</taxon>
        <taxon>Ascomycota</taxon>
        <taxon>Pezizomycotina</taxon>
        <taxon>Sordariomycetes</taxon>
        <taxon>Sordariomycetidae</taxon>
        <taxon>Sordariales</taxon>
        <taxon>Sordariaceae</taxon>
        <taxon>Neurospora</taxon>
    </lineage>
</organism>
<gene>
    <name type="primary">mrp4</name>
    <name type="ORF">NCU12023</name>
</gene>